<keyword id="KW-0489">Methyltransferase</keyword>
<keyword id="KW-1185">Reference proteome</keyword>
<keyword id="KW-0949">S-adenosyl-L-methionine</keyword>
<keyword id="KW-0808">Transferase</keyword>
<evidence type="ECO:0000255" key="1">
    <source>
        <dbReference type="HAMAP-Rule" id="MF_03044"/>
    </source>
</evidence>
<gene>
    <name evidence="1" type="primary">samtor</name>
    <name evidence="1" type="synonym">bmt2</name>
</gene>
<accession>A4IIA7</accession>
<accession>Q5M798</accession>
<proteinExistence type="evidence at transcript level"/>
<dbReference type="EC" id="2.1.1.-" evidence="1"/>
<dbReference type="EMBL" id="BC088770">
    <property type="protein sequence ID" value="AAH88770.1"/>
    <property type="molecule type" value="mRNA"/>
</dbReference>
<dbReference type="EMBL" id="BC135938">
    <property type="protein sequence ID" value="AAI35939.1"/>
    <property type="molecule type" value="mRNA"/>
</dbReference>
<dbReference type="RefSeq" id="NP_001076819.1">
    <property type="nucleotide sequence ID" value="NM_001083350.2"/>
</dbReference>
<dbReference type="SMR" id="A4IIA7"/>
<dbReference type="FunCoup" id="A4IIA7">
    <property type="interactions" value="1407"/>
</dbReference>
<dbReference type="STRING" id="8364.ENSXETP00000048480"/>
<dbReference type="PaxDb" id="8364-ENSXETP00000058945"/>
<dbReference type="DNASU" id="496879"/>
<dbReference type="GeneID" id="496879"/>
<dbReference type="KEGG" id="xtr:496879"/>
<dbReference type="AGR" id="Xenbase:XB-GENE-999766"/>
<dbReference type="CTD" id="154743"/>
<dbReference type="Xenbase" id="XB-GENE-999766">
    <property type="gene designation" value="samtor"/>
</dbReference>
<dbReference type="eggNOG" id="ENOG502QRK4">
    <property type="taxonomic scope" value="Eukaryota"/>
</dbReference>
<dbReference type="HOGENOM" id="CLU_036404_1_1_1"/>
<dbReference type="InParanoid" id="A4IIA7"/>
<dbReference type="OrthoDB" id="5954793at2759"/>
<dbReference type="Proteomes" id="UP000008143">
    <property type="component" value="Chromosome 3"/>
</dbReference>
<dbReference type="Bgee" id="ENSXETG00000037231">
    <property type="expression patterns" value="Expressed in egg cell and 13 other cell types or tissues"/>
</dbReference>
<dbReference type="GO" id="GO:0008168">
    <property type="term" value="F:methyltransferase activity"/>
    <property type="evidence" value="ECO:0007669"/>
    <property type="project" value="UniProtKB-UniRule"/>
</dbReference>
<dbReference type="GO" id="GO:1904047">
    <property type="term" value="F:S-adenosyl-L-methionine binding"/>
    <property type="evidence" value="ECO:0000250"/>
    <property type="project" value="UniProtKB"/>
</dbReference>
<dbReference type="GO" id="GO:0034198">
    <property type="term" value="P:cellular response to amino acid starvation"/>
    <property type="evidence" value="ECO:0000250"/>
    <property type="project" value="UniProtKB"/>
</dbReference>
<dbReference type="GO" id="GO:0032259">
    <property type="term" value="P:methylation"/>
    <property type="evidence" value="ECO:0007669"/>
    <property type="project" value="UniProtKB-KW"/>
</dbReference>
<dbReference type="GO" id="GO:1903432">
    <property type="term" value="P:regulation of TORC1 signaling"/>
    <property type="evidence" value="ECO:0000250"/>
    <property type="project" value="UniProtKB"/>
</dbReference>
<dbReference type="FunFam" id="3.40.50.150:FF:000089">
    <property type="entry name" value="S-adenosylmethionine sensor upstream of mTORC1"/>
    <property type="match status" value="1"/>
</dbReference>
<dbReference type="Gene3D" id="3.40.50.150">
    <property type="entry name" value="Vaccinia Virus protein VP39"/>
    <property type="match status" value="1"/>
</dbReference>
<dbReference type="HAMAP" id="MF_03044">
    <property type="entry name" value="BMT2"/>
    <property type="match status" value="1"/>
</dbReference>
<dbReference type="InterPro" id="IPR021867">
    <property type="entry name" value="Bmt2/SAMTOR"/>
</dbReference>
<dbReference type="InterPro" id="IPR029063">
    <property type="entry name" value="SAM-dependent_MTases_sf"/>
</dbReference>
<dbReference type="PANTHER" id="PTHR21008:SF0">
    <property type="entry name" value="S-ADENOSYLMETHIONINE SENSOR UPSTREAM OF MTORC1"/>
    <property type="match status" value="1"/>
</dbReference>
<dbReference type="PANTHER" id="PTHR21008">
    <property type="entry name" value="S-ADENOSYLMETHIONINE SENSOR UPSTREAM OF MTORC1-RELATED"/>
    <property type="match status" value="1"/>
</dbReference>
<dbReference type="Pfam" id="PF11968">
    <property type="entry name" value="Bmt2"/>
    <property type="match status" value="1"/>
</dbReference>
<dbReference type="SUPFAM" id="SSF53335">
    <property type="entry name" value="S-adenosyl-L-methionine-dependent methyltransferases"/>
    <property type="match status" value="1"/>
</dbReference>
<comment type="function">
    <text evidence="1">S-adenosyl-L-methionine-binding protein that acts as an inhibitor of mTORC1 signaling via interaction with the GATOR1 and KICSTOR complexes. Acts as a sensor of S-adenosyl-L-methionine to signal methionine sufficiency to mTORC1: in presence of methionine, binds S-adenosyl-L-methionine, leading to disrupt interaction with the GATOR1 and KICSTOR complexes and promote mTORC1 signaling. Upon methionine starvation, S-adenosyl-L-methionine levels are reduced, thereby promoting the association with GATOR1 and KICSTOR, leading to inhibit mTORC1 signaling. Probably also acts as a S-adenosyl-L-methionine-dependent methyltransferase.</text>
</comment>
<comment type="subunit">
    <text evidence="1">Interacts with the GATOR1 complex; interaction is disrupted when samtor binds S-adenosyl-L-methionine. Interacts with the KICSTOR complex; interaction is disrupted when samtor binds S-adenosyl-L-methionine.</text>
</comment>
<comment type="similarity">
    <text evidence="1">Belongs to the BMT2/SAMTOR family.</text>
</comment>
<sequence>MEPVLQARGKRENVLGNAREERCVPGFPSACEQKLEQEKLSGVVKRVHRDLRKKYREAGDFEKIWLEHCKDKGRLCEYAVAMKALADNHWAKKCEGEGRIEWCLGVCQEYFFNGGKKKAIEKDARRATLNKLQSPNHAEDGVSDFSVPNIKPLNDEYMTGKIRLLDVGSCYNPFLKYEDFLAVGIDIVPAVETVCKCDFLNLQIQRPLQFAPDAIDAFLKQLESPIDYLPAELFHVVVFSLLLSYFPSPYQRWICCKKAHELLTLNGLLLIITPDSSHQNRHAVMMKSWKIAIESLGFRRMTYSKFSHMHLMAFRKTSLKTTSDLITMNYPDMLYIPQDFNYDGEEDYFSPCCARSELEDEQLACGFTELPDTPYDSDSGESQNSTMPFYEFEDPILLLT</sequence>
<reference key="1">
    <citation type="submission" date="2004-12" db="EMBL/GenBank/DDBJ databases">
        <authorList>
            <consortium name="NIH - Xenopus Gene Collection (XGC) project"/>
        </authorList>
    </citation>
    <scope>NUCLEOTIDE SEQUENCE [LARGE SCALE MRNA]</scope>
    <source>
        <tissue>Embryo</tissue>
    </source>
</reference>
<organism>
    <name type="scientific">Xenopus tropicalis</name>
    <name type="common">Western clawed frog</name>
    <name type="synonym">Silurana tropicalis</name>
    <dbReference type="NCBI Taxonomy" id="8364"/>
    <lineage>
        <taxon>Eukaryota</taxon>
        <taxon>Metazoa</taxon>
        <taxon>Chordata</taxon>
        <taxon>Craniata</taxon>
        <taxon>Vertebrata</taxon>
        <taxon>Euteleostomi</taxon>
        <taxon>Amphibia</taxon>
        <taxon>Batrachia</taxon>
        <taxon>Anura</taxon>
        <taxon>Pipoidea</taxon>
        <taxon>Pipidae</taxon>
        <taxon>Xenopodinae</taxon>
        <taxon>Xenopus</taxon>
        <taxon>Silurana</taxon>
    </lineage>
</organism>
<protein>
    <recommendedName>
        <fullName evidence="1">S-adenosylmethionine sensor upstream of mTORC1</fullName>
    </recommendedName>
    <alternativeName>
        <fullName evidence="1">Probable methyltransferase BMT2 homolog</fullName>
        <ecNumber evidence="1">2.1.1.-</ecNumber>
    </alternativeName>
</protein>
<feature type="chain" id="PRO_0000321544" description="S-adenosylmethionine sensor upstream of mTORC1">
    <location>
        <begin position="1"/>
        <end position="400"/>
    </location>
</feature>
<feature type="binding site" evidence="1">
    <location>
        <position position="99"/>
    </location>
    <ligand>
        <name>S-adenosyl-L-methionine</name>
        <dbReference type="ChEBI" id="CHEBI:59789"/>
    </ligand>
</feature>
<feature type="binding site" evidence="1">
    <location>
        <position position="168"/>
    </location>
    <ligand>
        <name>S-adenosyl-L-methionine</name>
        <dbReference type="ChEBI" id="CHEBI:59789"/>
    </ligand>
</feature>
<feature type="binding site" evidence="1">
    <location>
        <position position="186"/>
    </location>
    <ligand>
        <name>S-adenosyl-L-methionine</name>
        <dbReference type="ChEBI" id="CHEBI:59789"/>
    </ligand>
</feature>
<feature type="binding site" evidence="1">
    <location>
        <position position="198"/>
    </location>
    <ligand>
        <name>S-adenosyl-L-methionine</name>
        <dbReference type="ChEBI" id="CHEBI:59789"/>
    </ligand>
</feature>
<feature type="binding site" evidence="1">
    <location>
        <position position="199"/>
    </location>
    <ligand>
        <name>S-adenosyl-L-methionine</name>
        <dbReference type="ChEBI" id="CHEBI:59789"/>
    </ligand>
</feature>
<feature type="binding site" evidence="1">
    <location>
        <position position="240"/>
    </location>
    <ligand>
        <name>S-adenosyl-L-methionine</name>
        <dbReference type="ChEBI" id="CHEBI:59789"/>
    </ligand>
</feature>
<name>SAMTR_XENTR</name>